<evidence type="ECO:0000255" key="1">
    <source>
        <dbReference type="HAMAP-Rule" id="MF_00531"/>
    </source>
</evidence>
<evidence type="ECO:0000305" key="2"/>
<name>RS19_LEPIC</name>
<protein>
    <recommendedName>
        <fullName evidence="1">Small ribosomal subunit protein uS19</fullName>
    </recommendedName>
    <alternativeName>
        <fullName evidence="2">30S ribosomal protein S19</fullName>
    </alternativeName>
</protein>
<accession>Q72NG5</accession>
<keyword id="KW-0687">Ribonucleoprotein</keyword>
<keyword id="KW-0689">Ribosomal protein</keyword>
<keyword id="KW-0694">RNA-binding</keyword>
<keyword id="KW-0699">rRNA-binding</keyword>
<comment type="function">
    <text evidence="1">Protein S19 forms a complex with S13 that binds strongly to the 16S ribosomal RNA.</text>
</comment>
<comment type="similarity">
    <text evidence="1">Belongs to the universal ribosomal protein uS19 family.</text>
</comment>
<dbReference type="EMBL" id="AE016823">
    <property type="protein sequence ID" value="AAS71422.1"/>
    <property type="molecule type" value="Genomic_DNA"/>
</dbReference>
<dbReference type="RefSeq" id="WP_000124499.1">
    <property type="nucleotide sequence ID" value="NC_005823.1"/>
</dbReference>
<dbReference type="SMR" id="Q72NG5"/>
<dbReference type="GeneID" id="61142743"/>
<dbReference type="KEGG" id="lic:LIC_12869"/>
<dbReference type="HOGENOM" id="CLU_144911_0_1_12"/>
<dbReference type="Proteomes" id="UP000007037">
    <property type="component" value="Chromosome I"/>
</dbReference>
<dbReference type="GO" id="GO:0005737">
    <property type="term" value="C:cytoplasm"/>
    <property type="evidence" value="ECO:0007669"/>
    <property type="project" value="UniProtKB-ARBA"/>
</dbReference>
<dbReference type="GO" id="GO:0015935">
    <property type="term" value="C:small ribosomal subunit"/>
    <property type="evidence" value="ECO:0007669"/>
    <property type="project" value="InterPro"/>
</dbReference>
<dbReference type="GO" id="GO:0019843">
    <property type="term" value="F:rRNA binding"/>
    <property type="evidence" value="ECO:0007669"/>
    <property type="project" value="UniProtKB-UniRule"/>
</dbReference>
<dbReference type="GO" id="GO:0003735">
    <property type="term" value="F:structural constituent of ribosome"/>
    <property type="evidence" value="ECO:0007669"/>
    <property type="project" value="InterPro"/>
</dbReference>
<dbReference type="GO" id="GO:0000028">
    <property type="term" value="P:ribosomal small subunit assembly"/>
    <property type="evidence" value="ECO:0007669"/>
    <property type="project" value="TreeGrafter"/>
</dbReference>
<dbReference type="GO" id="GO:0006412">
    <property type="term" value="P:translation"/>
    <property type="evidence" value="ECO:0007669"/>
    <property type="project" value="UniProtKB-UniRule"/>
</dbReference>
<dbReference type="FunFam" id="3.30.860.10:FF:000001">
    <property type="entry name" value="30S ribosomal protein S19"/>
    <property type="match status" value="1"/>
</dbReference>
<dbReference type="Gene3D" id="3.30.860.10">
    <property type="entry name" value="30s Ribosomal Protein S19, Chain A"/>
    <property type="match status" value="1"/>
</dbReference>
<dbReference type="HAMAP" id="MF_00531">
    <property type="entry name" value="Ribosomal_uS19"/>
    <property type="match status" value="1"/>
</dbReference>
<dbReference type="InterPro" id="IPR002222">
    <property type="entry name" value="Ribosomal_uS19"/>
</dbReference>
<dbReference type="InterPro" id="IPR005732">
    <property type="entry name" value="Ribosomal_uS19_bac-type"/>
</dbReference>
<dbReference type="InterPro" id="IPR020934">
    <property type="entry name" value="Ribosomal_uS19_CS"/>
</dbReference>
<dbReference type="InterPro" id="IPR023575">
    <property type="entry name" value="Ribosomal_uS19_SF"/>
</dbReference>
<dbReference type="NCBIfam" id="TIGR01050">
    <property type="entry name" value="rpsS_bact"/>
    <property type="match status" value="1"/>
</dbReference>
<dbReference type="PANTHER" id="PTHR11880">
    <property type="entry name" value="RIBOSOMAL PROTEIN S19P FAMILY MEMBER"/>
    <property type="match status" value="1"/>
</dbReference>
<dbReference type="PANTHER" id="PTHR11880:SF8">
    <property type="entry name" value="SMALL RIBOSOMAL SUBUNIT PROTEIN US19M"/>
    <property type="match status" value="1"/>
</dbReference>
<dbReference type="Pfam" id="PF00203">
    <property type="entry name" value="Ribosomal_S19"/>
    <property type="match status" value="1"/>
</dbReference>
<dbReference type="PIRSF" id="PIRSF002144">
    <property type="entry name" value="Ribosomal_S19"/>
    <property type="match status" value="1"/>
</dbReference>
<dbReference type="PRINTS" id="PR00975">
    <property type="entry name" value="RIBOSOMALS19"/>
</dbReference>
<dbReference type="SUPFAM" id="SSF54570">
    <property type="entry name" value="Ribosomal protein S19"/>
    <property type="match status" value="1"/>
</dbReference>
<dbReference type="PROSITE" id="PS00323">
    <property type="entry name" value="RIBOSOMAL_S19"/>
    <property type="match status" value="1"/>
</dbReference>
<organism>
    <name type="scientific">Leptospira interrogans serogroup Icterohaemorrhagiae serovar copenhageni (strain Fiocruz L1-130)</name>
    <dbReference type="NCBI Taxonomy" id="267671"/>
    <lineage>
        <taxon>Bacteria</taxon>
        <taxon>Pseudomonadati</taxon>
        <taxon>Spirochaetota</taxon>
        <taxon>Spirochaetia</taxon>
        <taxon>Leptospirales</taxon>
        <taxon>Leptospiraceae</taxon>
        <taxon>Leptospira</taxon>
    </lineage>
</organism>
<feature type="chain" id="PRO_0000129842" description="Small ribosomal subunit protein uS19">
    <location>
        <begin position="1"/>
        <end position="93"/>
    </location>
</feature>
<reference key="1">
    <citation type="journal article" date="2004" name="J. Bacteriol.">
        <title>Comparative genomics of two Leptospira interrogans serovars reveals novel insights into physiology and pathogenesis.</title>
        <authorList>
            <person name="Nascimento A.L.T.O."/>
            <person name="Ko A.I."/>
            <person name="Martins E.A.L."/>
            <person name="Monteiro-Vitorello C.B."/>
            <person name="Ho P.L."/>
            <person name="Haake D.A."/>
            <person name="Verjovski-Almeida S."/>
            <person name="Hartskeerl R.A."/>
            <person name="Marques M.V."/>
            <person name="Oliveira M.C."/>
            <person name="Menck C.F.M."/>
            <person name="Leite L.C.C."/>
            <person name="Carrer H."/>
            <person name="Coutinho L.L."/>
            <person name="Degrave W.M."/>
            <person name="Dellagostin O.A."/>
            <person name="El-Dorry H."/>
            <person name="Ferro E.S."/>
            <person name="Ferro M.I.T."/>
            <person name="Furlan L.R."/>
            <person name="Gamberini M."/>
            <person name="Giglioti E.A."/>
            <person name="Goes-Neto A."/>
            <person name="Goldman G.H."/>
            <person name="Goldman M.H.S."/>
            <person name="Harakava R."/>
            <person name="Jeronimo S.M.B."/>
            <person name="Junqueira-de-Azevedo I.L.M."/>
            <person name="Kimura E.T."/>
            <person name="Kuramae E.E."/>
            <person name="Lemos E.G.M."/>
            <person name="Lemos M.V.F."/>
            <person name="Marino C.L."/>
            <person name="Nunes L.R."/>
            <person name="de Oliveira R.C."/>
            <person name="Pereira G.G."/>
            <person name="Reis M.S."/>
            <person name="Schriefer A."/>
            <person name="Siqueira W.J."/>
            <person name="Sommer P."/>
            <person name="Tsai S.M."/>
            <person name="Simpson A.J.G."/>
            <person name="Ferro J.A."/>
            <person name="Camargo L.E.A."/>
            <person name="Kitajima J.P."/>
            <person name="Setubal J.C."/>
            <person name="Van Sluys M.A."/>
        </authorList>
    </citation>
    <scope>NUCLEOTIDE SEQUENCE [LARGE SCALE GENOMIC DNA]</scope>
    <source>
        <strain>Fiocruz L1-130</strain>
    </source>
</reference>
<gene>
    <name evidence="1" type="primary">rpsS</name>
    <name type="ordered locus">LIC_12869</name>
</gene>
<sequence length="93" mass="10668">MARSVKKGPFIDDHLMKKITKLNSENQKKPFKTWSRRSTIFPDMVGHTVMVHNGKQFTPVYINENMIGHKLGEFSPTRTFRAHVAGDKKAAKK</sequence>
<proteinExistence type="inferred from homology"/>